<protein>
    <recommendedName>
        <fullName evidence="2">RING finger protein Z</fullName>
        <shortName evidence="2">Protein Z</shortName>
    </recommendedName>
    <alternativeName>
        <fullName evidence="2">Zinc-binding protein</fullName>
    </alternativeName>
</protein>
<sequence length="98" mass="10986">MGNTKTKDRQYQSNSSQPTNTSAPVLLRRQAEPSLYGRHNCRCCWFADTNLVNCSNHYLCLKCLNTMLRRSNLCDICGEELPTTIIVPVEPSAPLPGQ</sequence>
<organism>
    <name type="scientific">Chapare mammarenavirus (isolate Human/Bolivia/810419/2003)</name>
    <dbReference type="NCBI Taxonomy" id="3052302"/>
    <lineage>
        <taxon>Viruses</taxon>
        <taxon>Riboviria</taxon>
        <taxon>Orthornavirae</taxon>
        <taxon>Negarnaviricota</taxon>
        <taxon>Polyploviricotina</taxon>
        <taxon>Ellioviricetes</taxon>
        <taxon>Bunyavirales</taxon>
        <taxon>Arenaviridae</taxon>
        <taxon>Mammarenavirus</taxon>
    </lineage>
</organism>
<accession>B2C4J2</accession>
<comment type="function">
    <text evidence="1 2">Plays a crucial role in virion assembly and budding. Expressed late in the virus life cycle, it acts as an inhibitor of viral transcription and RNA synthesis by interacting with the viral polymerase L. Presumably recruits the NP encapsidated genome to cellular membranes at budding sites via direct interaction with NP. Plays critical roles in the final steps of viral release by interacting with host TSG101, a member of the vacuolar protein-sorting pathway and using other cellular host proteins involved in vesicle formation pathway. The budding of the virus progeny occurs after association of protein Z with the viral glycoprotein complex SSP-GP1-GP2 at the cell periphery, step that requires myristoylation of protein Z. Also selectively represses protein production by associating with host eIF4E (By similarity). In cell-based minigenome assay, has an inhibitory effect on the ribonucleoprotein machinery (vRNP), which is responsible for the replication and transcription of the viral genome (By similarity).</text>
</comment>
<comment type="subunit">
    <text evidence="2">Interacts with protein NP; this interaction probably directs the encapsidated genome to budding sites. Interacts (via RING domain) with polymerase L; this interaction inhibits viral transcription and replication, Z partially blocks the product exit tunnel for the releasing nascent RNA product. Interacts with the glycoprotein complex; this interaction plays a role in virion budding. Interacts with host eIF4E; this interaction results in eIF4E reduced affinity for its substrate, the 5'-m7 G cap structure. Interacts (via late-budding domain) with host TSG101; this interaction is essential for budding and release of viral particles. Interacts with host RPLP0; this interaction may serve to load ribosome-like particles inside the virion. Interacts with host PML; this interaction induces PML bodies redistribution in the cytoplasm upon viral infection.</text>
</comment>
<comment type="subcellular location">
    <subcellularLocation>
        <location evidence="2">Virion</location>
    </subcellularLocation>
    <subcellularLocation>
        <location evidence="2">Host cytoplasm</location>
        <location evidence="2">Host perinuclear region</location>
    </subcellularLocation>
    <subcellularLocation>
        <location evidence="2">Host cell membrane</location>
        <topology evidence="2">Lipid-anchor</topology>
        <orientation evidence="2">Cytoplasmic side</orientation>
    </subcellularLocation>
    <text evidence="2">Mainly perinuclear. During budding, associates at the inner side of the plasma membrane of infected cells.</text>
</comment>
<comment type="domain">
    <text evidence="2">Late-budding domains (L domains) are short sequence motifs essential for viral particle budding. They recruit proteins of the host ESCRT machinery (Endosomal Sorting Complex Required for Transport) or ESCRT-associated proteins.</text>
</comment>
<comment type="PTM">
    <text evidence="1">Myristoylation is required for the role of RING finger protein Z in assembly and budding.</text>
</comment>
<comment type="similarity">
    <text>Belongs to the arenaviridae Z protein family.</text>
</comment>
<organismHost>
    <name type="scientific">Homo sapiens</name>
    <name type="common">Human</name>
    <dbReference type="NCBI Taxonomy" id="9606"/>
</organismHost>
<dbReference type="EMBL" id="EU260464">
    <property type="protein sequence ID" value="ABY87070.1"/>
    <property type="molecule type" value="Genomic_RNA"/>
</dbReference>
<dbReference type="RefSeq" id="YP_001816784.1">
    <property type="nucleotide sequence ID" value="NC_010563.1"/>
</dbReference>
<dbReference type="KEGG" id="vg:6216306"/>
<dbReference type="OrthoDB" id="23344at10239"/>
<dbReference type="Proteomes" id="UP000008449">
    <property type="component" value="Genome"/>
</dbReference>
<dbReference type="GO" id="GO:0044220">
    <property type="term" value="C:host cell perinuclear region of cytoplasm"/>
    <property type="evidence" value="ECO:0007669"/>
    <property type="project" value="UniProtKB-SubCell"/>
</dbReference>
<dbReference type="GO" id="GO:0020002">
    <property type="term" value="C:host cell plasma membrane"/>
    <property type="evidence" value="ECO:0007669"/>
    <property type="project" value="UniProtKB-SubCell"/>
</dbReference>
<dbReference type="GO" id="GO:0016020">
    <property type="term" value="C:membrane"/>
    <property type="evidence" value="ECO:0007669"/>
    <property type="project" value="UniProtKB-UniRule"/>
</dbReference>
<dbReference type="GO" id="GO:0044423">
    <property type="term" value="C:virion component"/>
    <property type="evidence" value="ECO:0007669"/>
    <property type="project" value="UniProtKB-UniRule"/>
</dbReference>
<dbReference type="GO" id="GO:0003723">
    <property type="term" value="F:RNA binding"/>
    <property type="evidence" value="ECO:0007669"/>
    <property type="project" value="UniProtKB-UniRule"/>
</dbReference>
<dbReference type="GO" id="GO:0008270">
    <property type="term" value="F:zinc ion binding"/>
    <property type="evidence" value="ECO:0007669"/>
    <property type="project" value="UniProtKB-UniRule"/>
</dbReference>
<dbReference type="GO" id="GO:0046761">
    <property type="term" value="P:viral budding from plasma membrane"/>
    <property type="evidence" value="ECO:0007669"/>
    <property type="project" value="UniProtKB-UniRule"/>
</dbReference>
<dbReference type="GO" id="GO:0039702">
    <property type="term" value="P:viral budding via host ESCRT complex"/>
    <property type="evidence" value="ECO:0007669"/>
    <property type="project" value="UniProtKB-UniRule"/>
</dbReference>
<dbReference type="Gene3D" id="3.30.160.310">
    <property type="match status" value="1"/>
</dbReference>
<dbReference type="HAMAP" id="MF_04087">
    <property type="entry name" value="ARENA_Z"/>
    <property type="match status" value="1"/>
</dbReference>
<dbReference type="InterPro" id="IPR024183">
    <property type="entry name" value="RING_finger_Z_arenaviridae"/>
</dbReference>
<dbReference type="InterPro" id="IPR038485">
    <property type="entry name" value="Z_RING-type_Znf_sf"/>
</dbReference>
<dbReference type="InterPro" id="IPR003224">
    <property type="entry name" value="Z_RING_Znf"/>
</dbReference>
<dbReference type="Pfam" id="PF03854">
    <property type="entry name" value="zf-P11"/>
    <property type="match status" value="1"/>
</dbReference>
<dbReference type="PIRSF" id="PIRSF004030">
    <property type="entry name" value="Z_ArenaV"/>
    <property type="match status" value="1"/>
</dbReference>
<dbReference type="SUPFAM" id="SSF57850">
    <property type="entry name" value="RING/U-box"/>
    <property type="match status" value="1"/>
</dbReference>
<evidence type="ECO:0000250" key="1">
    <source>
        <dbReference type="UniProtKB" id="P18541"/>
    </source>
</evidence>
<evidence type="ECO:0000255" key="2">
    <source>
        <dbReference type="HAMAP-Rule" id="MF_04087"/>
    </source>
</evidence>
<evidence type="ECO:0000256" key="3">
    <source>
        <dbReference type="SAM" id="MobiDB-lite"/>
    </source>
</evidence>
<proteinExistence type="inferred from homology"/>
<feature type="initiator methionine" description="Removed; by host" evidence="2">
    <location>
        <position position="1"/>
    </location>
</feature>
<feature type="chain" id="PRO_0000361029" description="RING finger protein Z" evidence="2">
    <location>
        <begin position="2"/>
        <end position="98"/>
    </location>
</feature>
<feature type="zinc finger region" description="RING-type; atypical" evidence="2">
    <location>
        <begin position="41"/>
        <end position="77"/>
    </location>
</feature>
<feature type="region of interest" description="Disordered" evidence="3">
    <location>
        <begin position="1"/>
        <end position="26"/>
    </location>
</feature>
<feature type="short sequence motif" description="PTAP/PSAP motif" evidence="2">
    <location>
        <begin position="91"/>
        <end position="94"/>
    </location>
</feature>
<feature type="compositionally biased region" description="Basic and acidic residues" evidence="3">
    <location>
        <begin position="1"/>
        <end position="10"/>
    </location>
</feature>
<feature type="compositionally biased region" description="Polar residues" evidence="3">
    <location>
        <begin position="11"/>
        <end position="23"/>
    </location>
</feature>
<feature type="lipid moiety-binding region" description="N-myristoyl glycine; by host" evidence="2">
    <location>
        <position position="2"/>
    </location>
</feature>
<reference key="1">
    <citation type="journal article" date="2008" name="PLoS Pathog.">
        <title>Chapare virus, a newly discovered arenavirus isolated from a fatal hemorrhagic fever case in Bolivia.</title>
        <authorList>
            <person name="Delgado S."/>
            <person name="Erickson B.R."/>
            <person name="Agudo R."/>
            <person name="Blair P.J."/>
            <person name="Vallejo E."/>
            <person name="Albarino C.G."/>
            <person name="Vargas J."/>
            <person name="Comer J.A."/>
            <person name="Rollin P.E."/>
            <person name="Ksiazek T.G."/>
            <person name="Olson J.G."/>
            <person name="Nichol S.T."/>
        </authorList>
    </citation>
    <scope>NUCLEOTIDE SEQUENCE [GENOMIC RNA]</scope>
</reference>
<name>Z_CHAVB</name>
<gene>
    <name evidence="2" type="primary">Z</name>
</gene>
<keyword id="KW-1032">Host cell membrane</keyword>
<keyword id="KW-1035">Host cytoplasm</keyword>
<keyword id="KW-1043">Host membrane</keyword>
<keyword id="KW-0945">Host-virus interaction</keyword>
<keyword id="KW-0449">Lipoprotein</keyword>
<keyword id="KW-0472">Membrane</keyword>
<keyword id="KW-0479">Metal-binding</keyword>
<keyword id="KW-0519">Myristate</keyword>
<keyword id="KW-1198">Viral budding</keyword>
<keyword id="KW-1187">Viral budding via the host ESCRT complexes</keyword>
<keyword id="KW-1188">Viral release from host cell</keyword>
<keyword id="KW-0946">Virion</keyword>
<keyword id="KW-0862">Zinc</keyword>
<keyword id="KW-0863">Zinc-finger</keyword>